<sequence>MKNILVTGGTGFIGSHTVVSLLKSGHQVVILDNLCNSSINILPRLKTITGQEIPFYQGDIRDREILRRIFAENRIDSVIHFAGLKAVGESVAEPMKYYDNNVSGSLVLAEEMARAGVFSIVFSSSATVYGDPGKVPYTEDMPLGDTTSPYGTSKSMVERILTDIQKADPRWSMILLRYFNPIGAHESGLIGEQPNGIPNNLLPYICQVASGRLPQLSVFGGDYPTPDGTGMRDYIHVMDLAEGHVAAMQAKSNVAGTHLLNLGSGRASSVLEIIRAFEAASGLTIPYEVKPRRAGDLACFYADPSYTKAQIGWQTQRDLAQMMEDSWRWVSNNPNGYDD</sequence>
<name>GALE_NEIMA</name>
<reference key="1">
    <citation type="journal article" date="2000" name="Nature">
        <title>Complete DNA sequence of a serogroup A strain of Neisseria meningitidis Z2491.</title>
        <authorList>
            <person name="Parkhill J."/>
            <person name="Achtman M."/>
            <person name="James K.D."/>
            <person name="Bentley S.D."/>
            <person name="Churcher C.M."/>
            <person name="Klee S.R."/>
            <person name="Morelli G."/>
            <person name="Basham D."/>
            <person name="Brown D."/>
            <person name="Chillingworth T."/>
            <person name="Davies R.M."/>
            <person name="Davis P."/>
            <person name="Devlin K."/>
            <person name="Feltwell T."/>
            <person name="Hamlin N."/>
            <person name="Holroyd S."/>
            <person name="Jagels K."/>
            <person name="Leather S."/>
            <person name="Moule S."/>
            <person name="Mungall K.L."/>
            <person name="Quail M.A."/>
            <person name="Rajandream M.A."/>
            <person name="Rutherford K.M."/>
            <person name="Simmonds M."/>
            <person name="Skelton J."/>
            <person name="Whitehead S."/>
            <person name="Spratt B.G."/>
            <person name="Barrell B.G."/>
        </authorList>
    </citation>
    <scope>NUCLEOTIDE SEQUENCE [LARGE SCALE GENOMIC DNA]</scope>
    <source>
        <strain>DSM 15465 / Z2491</strain>
    </source>
</reference>
<organism>
    <name type="scientific">Neisseria meningitidis serogroup A / serotype 4A (strain DSM 15465 / Z2491)</name>
    <dbReference type="NCBI Taxonomy" id="122587"/>
    <lineage>
        <taxon>Bacteria</taxon>
        <taxon>Pseudomonadati</taxon>
        <taxon>Pseudomonadota</taxon>
        <taxon>Betaproteobacteria</taxon>
        <taxon>Neisseriales</taxon>
        <taxon>Neisseriaceae</taxon>
        <taxon>Neisseria</taxon>
    </lineage>
</organism>
<protein>
    <recommendedName>
        <fullName>UDP-glucose 4-epimerase</fullName>
        <ecNumber>5.1.3.2</ecNumber>
    </recommendedName>
    <alternativeName>
        <fullName>Galactowaldenase</fullName>
    </alternativeName>
    <alternativeName>
        <fullName>UDP-galactose 4-epimerase</fullName>
    </alternativeName>
</protein>
<evidence type="ECO:0000250" key="1"/>
<evidence type="ECO:0000305" key="2"/>
<proteinExistence type="inferred from homology"/>
<comment type="function">
    <text evidence="1">Involved in the metabolism of galactose. Plays an essential role in the incorporation of galactose into meningococcal lipopolysaccharide surface molecules, which are important for pathogenesis. Catalyzes the conversion of UDP-galactose (UDP-Gal) to UDP-glucose (UDP-Glc) through a mechanism involving the transient reduction of NAD (By similarity).</text>
</comment>
<comment type="catalytic activity">
    <reaction>
        <text>UDP-alpha-D-glucose = UDP-alpha-D-galactose</text>
        <dbReference type="Rhea" id="RHEA:22168"/>
        <dbReference type="ChEBI" id="CHEBI:58885"/>
        <dbReference type="ChEBI" id="CHEBI:66914"/>
        <dbReference type="EC" id="5.1.3.2"/>
    </reaction>
</comment>
<comment type="cofactor">
    <cofactor evidence="1">
        <name>NAD(+)</name>
        <dbReference type="ChEBI" id="CHEBI:57540"/>
    </cofactor>
</comment>
<comment type="pathway">
    <text>Carbohydrate metabolism; galactose metabolism.</text>
</comment>
<comment type="subunit">
    <text evidence="1">Homodimer.</text>
</comment>
<comment type="similarity">
    <text evidence="2">Belongs to the NAD(P)-dependent epimerase/dehydratase family.</text>
</comment>
<accession>P56997</accession>
<accession>A1IP58</accession>
<feature type="chain" id="PRO_0000183212" description="UDP-glucose 4-epimerase">
    <location>
        <begin position="1"/>
        <end position="339"/>
    </location>
</feature>
<feature type="active site" description="Proton acceptor" evidence="1">
    <location>
        <position position="150"/>
    </location>
</feature>
<feature type="binding site" evidence="1">
    <location>
        <begin position="12"/>
        <end position="13"/>
    </location>
    <ligand>
        <name>NAD(+)</name>
        <dbReference type="ChEBI" id="CHEBI:57540"/>
    </ligand>
</feature>
<feature type="binding site" evidence="1">
    <location>
        <begin position="32"/>
        <end position="37"/>
    </location>
    <ligand>
        <name>NAD(+)</name>
        <dbReference type="ChEBI" id="CHEBI:57540"/>
    </ligand>
</feature>
<feature type="binding site" evidence="1">
    <location>
        <begin position="59"/>
        <end position="60"/>
    </location>
    <ligand>
        <name>NAD(+)</name>
        <dbReference type="ChEBI" id="CHEBI:57540"/>
    </ligand>
</feature>
<feature type="binding site" evidence="1">
    <location>
        <begin position="81"/>
        <end position="85"/>
    </location>
    <ligand>
        <name>NAD(+)</name>
        <dbReference type="ChEBI" id="CHEBI:57540"/>
    </ligand>
</feature>
<feature type="binding site" evidence="1">
    <location>
        <position position="100"/>
    </location>
    <ligand>
        <name>NAD(+)</name>
        <dbReference type="ChEBI" id="CHEBI:57540"/>
    </ligand>
</feature>
<feature type="binding site" evidence="1">
    <location>
        <position position="125"/>
    </location>
    <ligand>
        <name>NAD(+)</name>
        <dbReference type="ChEBI" id="CHEBI:57540"/>
    </ligand>
</feature>
<feature type="binding site" evidence="1">
    <location>
        <position position="125"/>
    </location>
    <ligand>
        <name>substrate</name>
    </ligand>
</feature>
<feature type="binding site" evidence="1">
    <location>
        <position position="150"/>
    </location>
    <ligand>
        <name>NAD(+)</name>
        <dbReference type="ChEBI" id="CHEBI:57540"/>
    </ligand>
</feature>
<feature type="binding site" evidence="1">
    <location>
        <position position="150"/>
    </location>
    <ligand>
        <name>substrate</name>
    </ligand>
</feature>
<feature type="binding site" evidence="1">
    <location>
        <position position="154"/>
    </location>
    <ligand>
        <name>NAD(+)</name>
        <dbReference type="ChEBI" id="CHEBI:57540"/>
    </ligand>
</feature>
<feature type="binding site" evidence="1">
    <location>
        <position position="179"/>
    </location>
    <ligand>
        <name>NAD(+)</name>
        <dbReference type="ChEBI" id="CHEBI:57540"/>
    </ligand>
</feature>
<feature type="binding site" evidence="1">
    <location>
        <position position="180"/>
    </location>
    <ligand>
        <name>substrate</name>
    </ligand>
</feature>
<feature type="binding site" evidence="1">
    <location>
        <begin position="200"/>
        <end position="201"/>
    </location>
    <ligand>
        <name>substrate</name>
    </ligand>
</feature>
<feature type="binding site" evidence="1">
    <location>
        <begin position="217"/>
        <end position="219"/>
    </location>
    <ligand>
        <name>substrate</name>
    </ligand>
</feature>
<feature type="binding site" evidence="1">
    <location>
        <position position="232"/>
    </location>
    <ligand>
        <name>substrate</name>
    </ligand>
</feature>
<feature type="binding site" evidence="1">
    <location>
        <begin position="293"/>
        <end position="296"/>
    </location>
    <ligand>
        <name>substrate</name>
    </ligand>
</feature>
<dbReference type="EC" id="5.1.3.2"/>
<dbReference type="EMBL" id="AL157959">
    <property type="protein sequence ID" value="CAM07517.1"/>
    <property type="molecule type" value="Genomic_DNA"/>
</dbReference>
<dbReference type="PIR" id="F82014">
    <property type="entry name" value="F82014"/>
</dbReference>
<dbReference type="RefSeq" id="WP_002249820.1">
    <property type="nucleotide sequence ID" value="NC_003116.1"/>
</dbReference>
<dbReference type="SMR" id="P56997"/>
<dbReference type="EnsemblBacteria" id="CAM07517">
    <property type="protein sequence ID" value="CAM07517"/>
    <property type="gene ID" value="NMA0203"/>
</dbReference>
<dbReference type="KEGG" id="nma:NMA0203"/>
<dbReference type="HOGENOM" id="CLU_007383_1_10_4"/>
<dbReference type="UniPathway" id="UPA00214"/>
<dbReference type="Proteomes" id="UP000000626">
    <property type="component" value="Chromosome"/>
</dbReference>
<dbReference type="GO" id="GO:0005829">
    <property type="term" value="C:cytosol"/>
    <property type="evidence" value="ECO:0007669"/>
    <property type="project" value="TreeGrafter"/>
</dbReference>
<dbReference type="GO" id="GO:0003978">
    <property type="term" value="F:UDP-glucose 4-epimerase activity"/>
    <property type="evidence" value="ECO:0007669"/>
    <property type="project" value="UniProtKB-EC"/>
</dbReference>
<dbReference type="GO" id="GO:0006012">
    <property type="term" value="P:galactose metabolic process"/>
    <property type="evidence" value="ECO:0007669"/>
    <property type="project" value="UniProtKB-UniPathway"/>
</dbReference>
<dbReference type="CDD" id="cd05247">
    <property type="entry name" value="UDP_G4E_1_SDR_e"/>
    <property type="match status" value="1"/>
</dbReference>
<dbReference type="Gene3D" id="3.40.50.720">
    <property type="entry name" value="NAD(P)-binding Rossmann-like Domain"/>
    <property type="match status" value="1"/>
</dbReference>
<dbReference type="Gene3D" id="3.90.25.10">
    <property type="entry name" value="UDP-galactose 4-epimerase, domain 1"/>
    <property type="match status" value="1"/>
</dbReference>
<dbReference type="InterPro" id="IPR001509">
    <property type="entry name" value="Epimerase_deHydtase"/>
</dbReference>
<dbReference type="InterPro" id="IPR036291">
    <property type="entry name" value="NAD(P)-bd_dom_sf"/>
</dbReference>
<dbReference type="InterPro" id="IPR005886">
    <property type="entry name" value="UDP_G4E"/>
</dbReference>
<dbReference type="NCBIfam" id="TIGR01179">
    <property type="entry name" value="galE"/>
    <property type="match status" value="1"/>
</dbReference>
<dbReference type="NCBIfam" id="NF007956">
    <property type="entry name" value="PRK10675.1"/>
    <property type="match status" value="1"/>
</dbReference>
<dbReference type="PANTHER" id="PTHR43725">
    <property type="entry name" value="UDP-GLUCOSE 4-EPIMERASE"/>
    <property type="match status" value="1"/>
</dbReference>
<dbReference type="PANTHER" id="PTHR43725:SF47">
    <property type="entry name" value="UDP-GLUCOSE 4-EPIMERASE"/>
    <property type="match status" value="1"/>
</dbReference>
<dbReference type="Pfam" id="PF01370">
    <property type="entry name" value="Epimerase"/>
    <property type="match status" value="1"/>
</dbReference>
<dbReference type="SUPFAM" id="SSF51735">
    <property type="entry name" value="NAD(P)-binding Rossmann-fold domains"/>
    <property type="match status" value="1"/>
</dbReference>
<keyword id="KW-0119">Carbohydrate metabolism</keyword>
<keyword id="KW-0299">Galactose metabolism</keyword>
<keyword id="KW-0413">Isomerase</keyword>
<keyword id="KW-0520">NAD</keyword>
<gene>
    <name type="primary">galE</name>
    <name type="ordered locus">NMA0203</name>
</gene>